<gene>
    <name evidence="1" type="primary">psd</name>
    <name type="ordered locus">NMCC_0907</name>
</gene>
<feature type="chain" id="PRO_1000082928" description="Phosphatidylserine decarboxylase beta chain" evidence="1">
    <location>
        <begin position="1"/>
        <end position="182"/>
    </location>
</feature>
<feature type="chain" id="PRO_1000082929" description="Phosphatidylserine decarboxylase alpha chain" evidence="1">
    <location>
        <begin position="183"/>
        <end position="265"/>
    </location>
</feature>
<feature type="region of interest" description="Disordered" evidence="2">
    <location>
        <begin position="218"/>
        <end position="242"/>
    </location>
</feature>
<feature type="active site" description="Schiff-base intermediate with substrate; via pyruvic acid" evidence="1">
    <location>
        <position position="183"/>
    </location>
</feature>
<feature type="site" description="Cleavage (non-hydrolytic); by autocatalysis" evidence="1">
    <location>
        <begin position="182"/>
        <end position="183"/>
    </location>
</feature>
<feature type="modified residue" description="Pyruvic acid (Ser); by autocatalysis" evidence="1">
    <location>
        <position position="183"/>
    </location>
</feature>
<dbReference type="EC" id="4.1.1.65" evidence="1"/>
<dbReference type="EMBL" id="CP000381">
    <property type="protein sequence ID" value="ABX73089.1"/>
    <property type="molecule type" value="Genomic_DNA"/>
</dbReference>
<dbReference type="RefSeq" id="WP_002226415.1">
    <property type="nucleotide sequence ID" value="NC_010120.1"/>
</dbReference>
<dbReference type="KEGG" id="nmn:NMCC_0907"/>
<dbReference type="HOGENOM" id="CLU_072492_0_0_4"/>
<dbReference type="UniPathway" id="UPA00558">
    <property type="reaction ID" value="UER00616"/>
</dbReference>
<dbReference type="Proteomes" id="UP000001177">
    <property type="component" value="Chromosome"/>
</dbReference>
<dbReference type="GO" id="GO:0005886">
    <property type="term" value="C:plasma membrane"/>
    <property type="evidence" value="ECO:0007669"/>
    <property type="project" value="UniProtKB-SubCell"/>
</dbReference>
<dbReference type="GO" id="GO:0004609">
    <property type="term" value="F:phosphatidylserine decarboxylase activity"/>
    <property type="evidence" value="ECO:0007669"/>
    <property type="project" value="UniProtKB-UniRule"/>
</dbReference>
<dbReference type="GO" id="GO:0006646">
    <property type="term" value="P:phosphatidylethanolamine biosynthetic process"/>
    <property type="evidence" value="ECO:0007669"/>
    <property type="project" value="UniProtKB-UniRule"/>
</dbReference>
<dbReference type="HAMAP" id="MF_00664">
    <property type="entry name" value="PS_decarb_PSD_A"/>
    <property type="match status" value="1"/>
</dbReference>
<dbReference type="InterPro" id="IPR003817">
    <property type="entry name" value="PS_Dcarbxylase"/>
</dbReference>
<dbReference type="InterPro" id="IPR033175">
    <property type="entry name" value="PSD-A"/>
</dbReference>
<dbReference type="NCBIfam" id="TIGR00164">
    <property type="entry name" value="AS_decarb"/>
    <property type="match status" value="1"/>
</dbReference>
<dbReference type="NCBIfam" id="NF003678">
    <property type="entry name" value="PRK05305.1-2"/>
    <property type="match status" value="1"/>
</dbReference>
<dbReference type="NCBIfam" id="NF003680">
    <property type="entry name" value="PRK05305.1-5"/>
    <property type="match status" value="1"/>
</dbReference>
<dbReference type="PANTHER" id="PTHR35809">
    <property type="entry name" value="ARCHAETIDYLSERINE DECARBOXYLASE PROENZYME-RELATED"/>
    <property type="match status" value="1"/>
</dbReference>
<dbReference type="PANTHER" id="PTHR35809:SF1">
    <property type="entry name" value="ARCHAETIDYLSERINE DECARBOXYLASE PROENZYME-RELATED"/>
    <property type="match status" value="1"/>
</dbReference>
<dbReference type="Pfam" id="PF02666">
    <property type="entry name" value="PS_Dcarbxylase"/>
    <property type="match status" value="1"/>
</dbReference>
<protein>
    <recommendedName>
        <fullName evidence="1">Phosphatidylserine decarboxylase proenzyme</fullName>
        <ecNumber evidence="1">4.1.1.65</ecNumber>
    </recommendedName>
    <component>
        <recommendedName>
            <fullName evidence="1">Phosphatidylserine decarboxylase alpha chain</fullName>
        </recommendedName>
    </component>
    <component>
        <recommendedName>
            <fullName evidence="1">Phosphatidylserine decarboxylase beta chain</fullName>
        </recommendedName>
    </component>
</protein>
<comment type="function">
    <text evidence="1">Catalyzes the formation of phosphatidylethanolamine (PtdEtn) from phosphatidylserine (PtdSer).</text>
</comment>
<comment type="catalytic activity">
    <reaction evidence="1">
        <text>a 1,2-diacyl-sn-glycero-3-phospho-L-serine + H(+) = a 1,2-diacyl-sn-glycero-3-phosphoethanolamine + CO2</text>
        <dbReference type="Rhea" id="RHEA:20828"/>
        <dbReference type="ChEBI" id="CHEBI:15378"/>
        <dbReference type="ChEBI" id="CHEBI:16526"/>
        <dbReference type="ChEBI" id="CHEBI:57262"/>
        <dbReference type="ChEBI" id="CHEBI:64612"/>
        <dbReference type="EC" id="4.1.1.65"/>
    </reaction>
</comment>
<comment type="cofactor">
    <cofactor evidence="1">
        <name>pyruvate</name>
        <dbReference type="ChEBI" id="CHEBI:15361"/>
    </cofactor>
    <text evidence="1">Binds 1 pyruvoyl group covalently per subunit.</text>
</comment>
<comment type="pathway">
    <text evidence="1">Phospholipid metabolism; phosphatidylethanolamine biosynthesis; phosphatidylethanolamine from CDP-diacylglycerol: step 2/2.</text>
</comment>
<comment type="subunit">
    <text evidence="1">Heterodimer of a large membrane-associated beta subunit and a small pyruvoyl-containing alpha subunit.</text>
</comment>
<comment type="subcellular location">
    <subcellularLocation>
        <location evidence="1">Cell membrane</location>
        <topology evidence="1">Peripheral membrane protein</topology>
    </subcellularLocation>
</comment>
<comment type="PTM">
    <text evidence="1">Is synthesized initially as an inactive proenzyme. Formation of the active enzyme involves a self-maturation process in which the active site pyruvoyl group is generated from an internal serine residue via an autocatalytic post-translational modification. Two non-identical subunits are generated from the proenzyme in this reaction, and the pyruvate is formed at the N-terminus of the alpha chain, which is derived from the carboxyl end of the proenzyme. The post-translation cleavage follows an unusual pathway, termed non-hydrolytic serinolysis, in which the side chain hydroxyl group of the serine supplies its oxygen atom to form the C-terminus of the beta chain, while the remainder of the serine residue undergoes an oxidative deamination to produce ammonia and the pyruvoyl prosthetic group on the alpha chain.</text>
</comment>
<comment type="similarity">
    <text evidence="1">Belongs to the phosphatidylserine decarboxylase family. PSD-A subfamily.</text>
</comment>
<evidence type="ECO:0000255" key="1">
    <source>
        <dbReference type="HAMAP-Rule" id="MF_00664"/>
    </source>
</evidence>
<evidence type="ECO:0000256" key="2">
    <source>
        <dbReference type="SAM" id="MobiDB-lite"/>
    </source>
</evidence>
<proteinExistence type="inferred from homology"/>
<organism>
    <name type="scientific">Neisseria meningitidis serogroup C (strain 053442)</name>
    <dbReference type="NCBI Taxonomy" id="374833"/>
    <lineage>
        <taxon>Bacteria</taxon>
        <taxon>Pseudomonadati</taxon>
        <taxon>Pseudomonadota</taxon>
        <taxon>Betaproteobacteria</taxon>
        <taxon>Neisseriales</taxon>
        <taxon>Neisseriaceae</taxon>
        <taxon>Neisseria</taxon>
    </lineage>
</organism>
<accession>A9M4G3</accession>
<sequence length="265" mass="29041">MNRLYPHPIIAREGWPIIGGGLALSLLVSMCCGWWSLPFWVFTVFALQFFRDPAREIPQNPEAVLSPVDGRIVVVERARDPYRDVDALKISIFMNVFNVHSQKSPADCTVTKVVYNKGKFVNADLDKASTENERNAVLATTASGREITFVQVAGLVARRILCYTQAGAKLSRGERYGFIRFGSRVDMYLPVDAQAQVAIGDKVNGVSTVLARLPLTAPQIESEPESEPALQTAPVETAANPSAEQRQIEAVAAKIQAAVQDVLKD</sequence>
<name>PSD_NEIM0</name>
<keyword id="KW-1003">Cell membrane</keyword>
<keyword id="KW-0210">Decarboxylase</keyword>
<keyword id="KW-0444">Lipid biosynthesis</keyword>
<keyword id="KW-0443">Lipid metabolism</keyword>
<keyword id="KW-0456">Lyase</keyword>
<keyword id="KW-0472">Membrane</keyword>
<keyword id="KW-0594">Phospholipid biosynthesis</keyword>
<keyword id="KW-1208">Phospholipid metabolism</keyword>
<keyword id="KW-0670">Pyruvate</keyword>
<keyword id="KW-0865">Zymogen</keyword>
<reference key="1">
    <citation type="journal article" date="2008" name="Genomics">
        <title>Characterization of ST-4821 complex, a unique Neisseria meningitidis clone.</title>
        <authorList>
            <person name="Peng J."/>
            <person name="Yang L."/>
            <person name="Yang F."/>
            <person name="Yang J."/>
            <person name="Yan Y."/>
            <person name="Nie H."/>
            <person name="Zhang X."/>
            <person name="Xiong Z."/>
            <person name="Jiang Y."/>
            <person name="Cheng F."/>
            <person name="Xu X."/>
            <person name="Chen S."/>
            <person name="Sun L."/>
            <person name="Li W."/>
            <person name="Shen Y."/>
            <person name="Shao Z."/>
            <person name="Liang X."/>
            <person name="Xu J."/>
            <person name="Jin Q."/>
        </authorList>
    </citation>
    <scope>NUCLEOTIDE SEQUENCE [LARGE SCALE GENOMIC DNA]</scope>
    <source>
        <strain>053442</strain>
    </source>
</reference>